<dbReference type="EMBL" id="X58065">
    <property type="protein sequence ID" value="CAA41096.1"/>
    <property type="molecule type" value="Genomic_RNA"/>
</dbReference>
<dbReference type="PIR" id="S14598">
    <property type="entry name" value="S14598"/>
</dbReference>
<dbReference type="SMR" id="P30208"/>
<dbReference type="GlyCosmos" id="P30208">
    <property type="glycosylation" value="18 sites, No reported glycans"/>
</dbReference>
<dbReference type="GO" id="GO:0044173">
    <property type="term" value="C:host cell endoplasmic reticulum-Golgi intermediate compartment membrane"/>
    <property type="evidence" value="ECO:0007669"/>
    <property type="project" value="UniProtKB-SubCell"/>
</dbReference>
<dbReference type="GO" id="GO:0016020">
    <property type="term" value="C:membrane"/>
    <property type="evidence" value="ECO:0007669"/>
    <property type="project" value="UniProtKB-KW"/>
</dbReference>
<dbReference type="GO" id="GO:0019031">
    <property type="term" value="C:viral envelope"/>
    <property type="evidence" value="ECO:0007669"/>
    <property type="project" value="UniProtKB-KW"/>
</dbReference>
<dbReference type="GO" id="GO:0055036">
    <property type="term" value="C:virion membrane"/>
    <property type="evidence" value="ECO:0007669"/>
    <property type="project" value="UniProtKB-SubCell"/>
</dbReference>
<dbReference type="GO" id="GO:0075509">
    <property type="term" value="P:endocytosis involved in viral entry into host cell"/>
    <property type="evidence" value="ECO:0007669"/>
    <property type="project" value="UniProtKB-KW"/>
</dbReference>
<dbReference type="GO" id="GO:0039654">
    <property type="term" value="P:fusion of virus membrane with host endosome membrane"/>
    <property type="evidence" value="ECO:0007669"/>
    <property type="project" value="UniProtKB-KW"/>
</dbReference>
<dbReference type="GO" id="GO:0019062">
    <property type="term" value="P:virion attachment to host cell"/>
    <property type="evidence" value="ECO:0007669"/>
    <property type="project" value="UniProtKB-KW"/>
</dbReference>
<dbReference type="InterPro" id="IPR043607">
    <property type="entry name" value="CoV_S1_C"/>
</dbReference>
<dbReference type="Pfam" id="PF19209">
    <property type="entry name" value="CoV_S1_C"/>
    <property type="match status" value="1"/>
</dbReference>
<accession>P30208</accession>
<name>SPIKE_IBVU3</name>
<feature type="chain" id="PRO_0000037181" description="Spike glycoprotein">
    <location>
        <begin position="1"/>
        <end position="520" status="greater than"/>
    </location>
</feature>
<feature type="chain" id="PRO_0000037182" description="Spike protein S1" evidence="2">
    <location>
        <begin position="1"/>
        <end position="520"/>
    </location>
</feature>
<feature type="topological domain" description="Extracellular" evidence="2">
    <location>
        <begin position="1" status="less than"/>
        <end position="520" status="greater than"/>
    </location>
</feature>
<feature type="glycosylation site" description="N-linked (GlcNAc...) asparagine; by host" evidence="2">
    <location>
        <position position="5"/>
    </location>
</feature>
<feature type="glycosylation site" description="N-linked (GlcNAc...) asparagine; by host" evidence="2">
    <location>
        <position position="33"/>
    </location>
</feature>
<feature type="glycosylation site" description="N-linked (GlcNAc...) asparagine; by host" evidence="2">
    <location>
        <position position="56"/>
    </location>
</feature>
<feature type="glycosylation site" description="N-linked (GlcNAc...) asparagine; by host" evidence="2">
    <location>
        <position position="84"/>
    </location>
</feature>
<feature type="glycosylation site" description="N-linked (GlcNAc...) asparagine; by host" evidence="2">
    <location>
        <position position="127"/>
    </location>
</feature>
<feature type="glycosylation site" description="N-linked (GlcNAc...) asparagine; by host" evidence="2">
    <location>
        <position position="146"/>
    </location>
</feature>
<feature type="glycosylation site" description="N-linked (GlcNAc...) asparagine; by host" evidence="2">
    <location>
        <position position="161"/>
    </location>
</feature>
<feature type="glycosylation site" description="N-linked (GlcNAc...) asparagine; by host" evidence="2">
    <location>
        <position position="195"/>
    </location>
</feature>
<feature type="glycosylation site" description="N-linked (GlcNAc...) asparagine; by host" evidence="2">
    <location>
        <position position="220"/>
    </location>
</feature>
<feature type="glycosylation site" description="N-linked (GlcNAc...) asparagine; by host" evidence="2">
    <location>
        <position position="230"/>
    </location>
</feature>
<feature type="glycosylation site" description="N-linked (GlcNAc...) asparagine; by host" evidence="2">
    <location>
        <position position="247"/>
    </location>
</feature>
<feature type="glycosylation site" description="N-linked (GlcNAc...) asparagine; by host" evidence="2">
    <location>
        <position position="254"/>
    </location>
</feature>
<feature type="glycosylation site" description="N-linked (GlcNAc...) asparagine; by host" evidence="2">
    <location>
        <position position="259"/>
    </location>
</feature>
<feature type="glycosylation site" description="N-linked (GlcNAc...) asparagine; by host" evidence="2">
    <location>
        <position position="289"/>
    </location>
</feature>
<feature type="glycosylation site" description="N-linked (GlcNAc...) asparagine; by host" evidence="2">
    <location>
        <position position="408"/>
    </location>
</feature>
<feature type="glycosylation site" description="N-linked (GlcNAc...) asparagine; by host" evidence="2">
    <location>
        <position position="430"/>
    </location>
</feature>
<feature type="glycosylation site" description="N-linked (GlcNAc...) asparagine; by host" evidence="2">
    <location>
        <position position="496"/>
    </location>
</feature>
<feature type="glycosylation site" description="N-linked (GlcNAc...) asparagine; by host" evidence="2">
    <location>
        <position position="513"/>
    </location>
</feature>
<feature type="non-terminal residue">
    <location>
        <position position="1"/>
    </location>
</feature>
<feature type="non-terminal residue">
    <location>
        <position position="520"/>
    </location>
</feature>
<organism>
    <name type="scientific">Avian infectious bronchitis virus (strain UK/167/84)</name>
    <name type="common">IBV</name>
    <dbReference type="NCBI Taxonomy" id="31628"/>
    <lineage>
        <taxon>Viruses</taxon>
        <taxon>Riboviria</taxon>
        <taxon>Orthornavirae</taxon>
        <taxon>Pisuviricota</taxon>
        <taxon>Pisoniviricetes</taxon>
        <taxon>Nidovirales</taxon>
        <taxon>Cornidovirineae</taxon>
        <taxon>Coronaviridae</taxon>
        <taxon>Orthocoronavirinae</taxon>
        <taxon>Gammacoronavirus</taxon>
        <taxon>Igacovirus</taxon>
        <taxon>Avian coronavirus</taxon>
    </lineage>
</organism>
<proteinExistence type="inferred from homology"/>
<evidence type="ECO:0000250" key="1"/>
<evidence type="ECO:0000255" key="2"/>
<evidence type="ECO:0000305" key="3"/>
<protein>
    <recommendedName>
        <fullName>Spike glycoprotein</fullName>
        <shortName>S glycoprotein</shortName>
    </recommendedName>
    <alternativeName>
        <fullName>E2</fullName>
    </alternativeName>
    <alternativeName>
        <fullName>Peplomer protein</fullName>
    </alternativeName>
    <component>
        <recommendedName>
            <fullName>Spike protein S1</fullName>
        </recommendedName>
    </component>
</protein>
<comment type="function">
    <text>S1 attaches the virion to the cell membrane by interacting with cell receptors, initiating the infection.</text>
</comment>
<comment type="subunit">
    <text evidence="1">Homotrimer; each monomer consists of a S1 and a S2 subunit. The resulting peplomers protrude from the virus surface as spikes (By similarity).</text>
</comment>
<comment type="subcellular location">
    <molecule>Spike protein S1</molecule>
    <subcellularLocation>
        <location evidence="1">Virion membrane</location>
        <topology evidence="1">Peripheral membrane protein</topology>
    </subcellularLocation>
    <subcellularLocation>
        <location evidence="1">Host endoplasmic reticulum-Golgi intermediate compartment membrane</location>
        <topology evidence="1">Peripheral membrane protein</topology>
    </subcellularLocation>
    <text evidence="1">Accumulates in the endoplasmic reticulum-Golgi intermediate compartment, where it participates in virus particle assembly. S1 is not anchored to the viral envelope, but associates with the extravirion surface through its binding to S2 (By similarity).</text>
</comment>
<comment type="PTM">
    <text evidence="1">Specific enzymatic cleavages in vivo yield mature proteins. The precursor is processed into S1 and S2 by host cell furin or furin-like protease to yield the mature S1 and S2 proteins. The cleavage site between S1 and S2 requires the optimal sequence [KR]-X-[KR]-R. Cleavage is not necessary for virus-cell fusion (By similarity).</text>
</comment>
<comment type="similarity">
    <text evidence="3">Belongs to the coronaviruses spike protein family.</text>
</comment>
<reference key="1">
    <citation type="submission" date="1991-03" db="EMBL/GenBank/DDBJ databases">
        <authorList>
            <person name="Cavanagh D."/>
            <person name="Davis P.J."/>
            <person name="Cook J.K.A."/>
            <person name="Li D."/>
            <person name="Kant A."/>
            <person name="Koch G."/>
        </authorList>
    </citation>
    <scope>NUCLEOTIDE SEQUENCE [GENOMIC RNA]</scope>
</reference>
<organismHost>
    <name type="scientific">Gallus gallus</name>
    <name type="common">Chicken</name>
    <dbReference type="NCBI Taxonomy" id="9031"/>
</organismHost>
<sequence>NLFGNNSYVYYYQSAFRPPDGWHLHGGAYEVVNVSTESSNAGTNGCTVGAIYWSKNFSAASVAMTAPQNGMSWSTGQFCTAHCNFTDFVVFVTHCYKSGPGSCPLTGLIPQNHIRISAMKSGSLFYNLTVAVTKYPRFKSLQCVNNMTSVYLNGDLVFTSNETKDVSAAGVHFKAGGPITYKVMREVKALAYFVNGTAQDVILCDGSPTGLLACQYNTGNFSDGFYPFTNSSLVKEKFIVYRESSVNTTLELTNFTFSNVSNATPNTGGVQTIQLYQTKTAQSGYYNLNFSFLSSFSYKASDYMYGSYHPSCKFRLETINNGFWFNPLSVSLGYGPIQGGCKQSVFANRATCCYAYSYNGPSLCKGVYRGELTKSFECGLLVFVTKTDGSRIQTRNEPFTLTQHNYNNITLDRCVEYNIYGRVGQGFITNVTNYAINYNYLADGGMAILDTSGAIDIFVVQGEYGLNYYKVNPCEDVNQQFVVSGGKLVGILTSRNETGSQPLENQFYIKIINGTRRSRR</sequence>
<keyword id="KW-0165">Cleavage on pair of basic residues</keyword>
<keyword id="KW-1170">Fusion of virus membrane with host endosomal membrane</keyword>
<keyword id="KW-1168">Fusion of virus membrane with host membrane</keyword>
<keyword id="KW-0325">Glycoprotein</keyword>
<keyword id="KW-1043">Host membrane</keyword>
<keyword id="KW-0945">Host-virus interaction</keyword>
<keyword id="KW-0472">Membrane</keyword>
<keyword id="KW-1161">Viral attachment to host cell</keyword>
<keyword id="KW-0261">Viral envelope protein</keyword>
<keyword id="KW-1162">Viral penetration into host cytoplasm</keyword>
<keyword id="KW-0946">Virion</keyword>
<keyword id="KW-0843">Virulence</keyword>
<keyword id="KW-1164">Virus endocytosis by host</keyword>
<keyword id="KW-1160">Virus entry into host cell</keyword>
<gene>
    <name type="primary">S</name>
    <name type="ORF">2</name>
</gene>